<name>EFP_YERPA</name>
<gene>
    <name evidence="1" type="primary">efp</name>
    <name type="ordered locus">YPA_3928</name>
</gene>
<organism>
    <name type="scientific">Yersinia pestis bv. Antiqua (strain Antiqua)</name>
    <dbReference type="NCBI Taxonomy" id="360102"/>
    <lineage>
        <taxon>Bacteria</taxon>
        <taxon>Pseudomonadati</taxon>
        <taxon>Pseudomonadota</taxon>
        <taxon>Gammaproteobacteria</taxon>
        <taxon>Enterobacterales</taxon>
        <taxon>Yersiniaceae</taxon>
        <taxon>Yersinia</taxon>
    </lineage>
</organism>
<evidence type="ECO:0000255" key="1">
    <source>
        <dbReference type="HAMAP-Rule" id="MF_00141"/>
    </source>
</evidence>
<feature type="chain" id="PRO_1000010903" description="Elongation factor P">
    <location>
        <begin position="1"/>
        <end position="188"/>
    </location>
</feature>
<feature type="modified residue" description="N6-(3,6-diaminohexanoyl)-5-hydroxylysine" evidence="1">
    <location>
        <position position="34"/>
    </location>
</feature>
<sequence>MASYYSNDFRPGLKIMFEGEPYAVESSEFVKPGKGQAFARVKMRRLLTGGRVEKTFKSTDSLEGADVNDMNLTYLYNDGEFWHFMNNETYEQLQADAKAVGDNGKWLIDQAECIVTLWNGQPIAVTPPNFVELEIVDTDPGLKGDTAGTGGKPATLSTGAVVKVPLFVQVGEIIKVDTRSGEYVSRVK</sequence>
<protein>
    <recommendedName>
        <fullName evidence="1">Elongation factor P</fullName>
        <shortName evidence="1">EF-P</shortName>
    </recommendedName>
</protein>
<comment type="function">
    <text evidence="1">Involved in peptide bond synthesis. Alleviates ribosome stalling that occurs when 3 or more consecutive Pro residues or the sequence PPG is present in a protein, possibly by augmenting the peptidyl transferase activity of the ribosome. Modification of Lys-34 is required for alleviation.</text>
</comment>
<comment type="pathway">
    <text evidence="1">Protein biosynthesis; polypeptide chain elongation.</text>
</comment>
<comment type="subcellular location">
    <subcellularLocation>
        <location evidence="1">Cytoplasm</location>
    </subcellularLocation>
</comment>
<comment type="PTM">
    <text evidence="1">May be beta-lysylated on the epsilon-amino group of Lys-34 by the combined action of EpmA and EpmB, and then hydroxylated on the C5 position of the same residue by EpmC (if this protein is present). Lysylation is critical for the stimulatory effect of EF-P on peptide-bond formation. The lysylation moiety may extend toward the peptidyltransferase center and stabilize the terminal 3-CCA end of the tRNA. Hydroxylation of the C5 position on Lys-34 may allow additional potential stabilizing hydrogen-bond interactions with the P-tRNA.</text>
</comment>
<comment type="similarity">
    <text evidence="1">Belongs to the elongation factor P family.</text>
</comment>
<keyword id="KW-0963">Cytoplasm</keyword>
<keyword id="KW-0251">Elongation factor</keyword>
<keyword id="KW-0379">Hydroxylation</keyword>
<keyword id="KW-0648">Protein biosynthesis</keyword>
<dbReference type="EMBL" id="CP000308">
    <property type="protein sequence ID" value="ABG15889.1"/>
    <property type="molecule type" value="Genomic_DNA"/>
</dbReference>
<dbReference type="RefSeq" id="WP_002209131.1">
    <property type="nucleotide sequence ID" value="NZ_CP009906.1"/>
</dbReference>
<dbReference type="SMR" id="Q1C0Y3"/>
<dbReference type="GeneID" id="57974254"/>
<dbReference type="KEGG" id="ypa:YPA_3928"/>
<dbReference type="UniPathway" id="UPA00345"/>
<dbReference type="Proteomes" id="UP000001971">
    <property type="component" value="Chromosome"/>
</dbReference>
<dbReference type="GO" id="GO:0005737">
    <property type="term" value="C:cytoplasm"/>
    <property type="evidence" value="ECO:0007669"/>
    <property type="project" value="UniProtKB-SubCell"/>
</dbReference>
<dbReference type="GO" id="GO:0003746">
    <property type="term" value="F:translation elongation factor activity"/>
    <property type="evidence" value="ECO:0007669"/>
    <property type="project" value="UniProtKB-UniRule"/>
</dbReference>
<dbReference type="GO" id="GO:0043043">
    <property type="term" value="P:peptide biosynthetic process"/>
    <property type="evidence" value="ECO:0007669"/>
    <property type="project" value="InterPro"/>
</dbReference>
<dbReference type="CDD" id="cd04470">
    <property type="entry name" value="S1_EF-P_repeat_1"/>
    <property type="match status" value="1"/>
</dbReference>
<dbReference type="CDD" id="cd05794">
    <property type="entry name" value="S1_EF-P_repeat_2"/>
    <property type="match status" value="1"/>
</dbReference>
<dbReference type="FunFam" id="2.30.30.30:FF:000003">
    <property type="entry name" value="Elongation factor P"/>
    <property type="match status" value="1"/>
</dbReference>
<dbReference type="FunFam" id="2.40.50.140:FF:000004">
    <property type="entry name" value="Elongation factor P"/>
    <property type="match status" value="1"/>
</dbReference>
<dbReference type="FunFam" id="2.40.50.140:FF:000009">
    <property type="entry name" value="Elongation factor P"/>
    <property type="match status" value="1"/>
</dbReference>
<dbReference type="Gene3D" id="2.30.30.30">
    <property type="match status" value="1"/>
</dbReference>
<dbReference type="Gene3D" id="2.40.50.140">
    <property type="entry name" value="Nucleic acid-binding proteins"/>
    <property type="match status" value="2"/>
</dbReference>
<dbReference type="HAMAP" id="MF_00141">
    <property type="entry name" value="EF_P"/>
    <property type="match status" value="1"/>
</dbReference>
<dbReference type="InterPro" id="IPR015365">
    <property type="entry name" value="Elong-fact-P_C"/>
</dbReference>
<dbReference type="InterPro" id="IPR012340">
    <property type="entry name" value="NA-bd_OB-fold"/>
</dbReference>
<dbReference type="InterPro" id="IPR014722">
    <property type="entry name" value="Rib_uL2_dom2"/>
</dbReference>
<dbReference type="InterPro" id="IPR020599">
    <property type="entry name" value="Transl_elong_fac_P/YeiP"/>
</dbReference>
<dbReference type="InterPro" id="IPR013185">
    <property type="entry name" value="Transl_elong_KOW-like"/>
</dbReference>
<dbReference type="InterPro" id="IPR001059">
    <property type="entry name" value="Transl_elong_P/YeiP_cen"/>
</dbReference>
<dbReference type="InterPro" id="IPR013852">
    <property type="entry name" value="Transl_elong_P/YeiP_CS"/>
</dbReference>
<dbReference type="InterPro" id="IPR011768">
    <property type="entry name" value="Transl_elongation_fac_P"/>
</dbReference>
<dbReference type="InterPro" id="IPR008991">
    <property type="entry name" value="Translation_prot_SH3-like_sf"/>
</dbReference>
<dbReference type="NCBIfam" id="TIGR00038">
    <property type="entry name" value="efp"/>
    <property type="match status" value="1"/>
</dbReference>
<dbReference type="NCBIfam" id="NF001810">
    <property type="entry name" value="PRK00529.1"/>
    <property type="match status" value="1"/>
</dbReference>
<dbReference type="PANTHER" id="PTHR30053">
    <property type="entry name" value="ELONGATION FACTOR P"/>
    <property type="match status" value="1"/>
</dbReference>
<dbReference type="PANTHER" id="PTHR30053:SF12">
    <property type="entry name" value="ELONGATION FACTOR P (EF-P) FAMILY PROTEIN"/>
    <property type="match status" value="1"/>
</dbReference>
<dbReference type="Pfam" id="PF01132">
    <property type="entry name" value="EFP"/>
    <property type="match status" value="1"/>
</dbReference>
<dbReference type="Pfam" id="PF08207">
    <property type="entry name" value="EFP_N"/>
    <property type="match status" value="1"/>
</dbReference>
<dbReference type="Pfam" id="PF09285">
    <property type="entry name" value="Elong-fact-P_C"/>
    <property type="match status" value="1"/>
</dbReference>
<dbReference type="PIRSF" id="PIRSF005901">
    <property type="entry name" value="EF-P"/>
    <property type="match status" value="1"/>
</dbReference>
<dbReference type="SMART" id="SM01185">
    <property type="entry name" value="EFP"/>
    <property type="match status" value="1"/>
</dbReference>
<dbReference type="SMART" id="SM00841">
    <property type="entry name" value="Elong-fact-P_C"/>
    <property type="match status" value="1"/>
</dbReference>
<dbReference type="SUPFAM" id="SSF50249">
    <property type="entry name" value="Nucleic acid-binding proteins"/>
    <property type="match status" value="2"/>
</dbReference>
<dbReference type="SUPFAM" id="SSF50104">
    <property type="entry name" value="Translation proteins SH3-like domain"/>
    <property type="match status" value="1"/>
</dbReference>
<dbReference type="PROSITE" id="PS01275">
    <property type="entry name" value="EFP"/>
    <property type="match status" value="1"/>
</dbReference>
<accession>Q1C0Y3</accession>
<proteinExistence type="inferred from homology"/>
<reference key="1">
    <citation type="journal article" date="2006" name="J. Bacteriol.">
        <title>Complete genome sequence of Yersinia pestis strains Antiqua and Nepal516: evidence of gene reduction in an emerging pathogen.</title>
        <authorList>
            <person name="Chain P.S.G."/>
            <person name="Hu P."/>
            <person name="Malfatti S.A."/>
            <person name="Radnedge L."/>
            <person name="Larimer F."/>
            <person name="Vergez L.M."/>
            <person name="Worsham P."/>
            <person name="Chu M.C."/>
            <person name="Andersen G.L."/>
        </authorList>
    </citation>
    <scope>NUCLEOTIDE SEQUENCE [LARGE SCALE GENOMIC DNA]</scope>
    <source>
        <strain>Antiqua</strain>
    </source>
</reference>